<reference evidence="8" key="1">
    <citation type="journal article" date="2000" name="Science">
        <title>The genome sequence of Drosophila melanogaster.</title>
        <authorList>
            <person name="Adams M.D."/>
            <person name="Celniker S.E."/>
            <person name="Holt R.A."/>
            <person name="Evans C.A."/>
            <person name="Gocayne J.D."/>
            <person name="Amanatides P.G."/>
            <person name="Scherer S.E."/>
            <person name="Li P.W."/>
            <person name="Hoskins R.A."/>
            <person name="Galle R.F."/>
            <person name="George R.A."/>
            <person name="Lewis S.E."/>
            <person name="Richards S."/>
            <person name="Ashburner M."/>
            <person name="Henderson S.N."/>
            <person name="Sutton G.G."/>
            <person name="Wortman J.R."/>
            <person name="Yandell M.D."/>
            <person name="Zhang Q."/>
            <person name="Chen L.X."/>
            <person name="Brandon R.C."/>
            <person name="Rogers Y.-H.C."/>
            <person name="Blazej R.G."/>
            <person name="Champe M."/>
            <person name="Pfeiffer B.D."/>
            <person name="Wan K.H."/>
            <person name="Doyle C."/>
            <person name="Baxter E.G."/>
            <person name="Helt G."/>
            <person name="Nelson C.R."/>
            <person name="Miklos G.L.G."/>
            <person name="Abril J.F."/>
            <person name="Agbayani A."/>
            <person name="An H.-J."/>
            <person name="Andrews-Pfannkoch C."/>
            <person name="Baldwin D."/>
            <person name="Ballew R.M."/>
            <person name="Basu A."/>
            <person name="Baxendale J."/>
            <person name="Bayraktaroglu L."/>
            <person name="Beasley E.M."/>
            <person name="Beeson K.Y."/>
            <person name="Benos P.V."/>
            <person name="Berman B.P."/>
            <person name="Bhandari D."/>
            <person name="Bolshakov S."/>
            <person name="Borkova D."/>
            <person name="Botchan M.R."/>
            <person name="Bouck J."/>
            <person name="Brokstein P."/>
            <person name="Brottier P."/>
            <person name="Burtis K.C."/>
            <person name="Busam D.A."/>
            <person name="Butler H."/>
            <person name="Cadieu E."/>
            <person name="Center A."/>
            <person name="Chandra I."/>
            <person name="Cherry J.M."/>
            <person name="Cawley S."/>
            <person name="Dahlke C."/>
            <person name="Davenport L.B."/>
            <person name="Davies P."/>
            <person name="de Pablos B."/>
            <person name="Delcher A."/>
            <person name="Deng Z."/>
            <person name="Mays A.D."/>
            <person name="Dew I."/>
            <person name="Dietz S.M."/>
            <person name="Dodson K."/>
            <person name="Doup L.E."/>
            <person name="Downes M."/>
            <person name="Dugan-Rocha S."/>
            <person name="Dunkov B.C."/>
            <person name="Dunn P."/>
            <person name="Durbin K.J."/>
            <person name="Evangelista C.C."/>
            <person name="Ferraz C."/>
            <person name="Ferriera S."/>
            <person name="Fleischmann W."/>
            <person name="Fosler C."/>
            <person name="Gabrielian A.E."/>
            <person name="Garg N.S."/>
            <person name="Gelbart W.M."/>
            <person name="Glasser K."/>
            <person name="Glodek A."/>
            <person name="Gong F."/>
            <person name="Gorrell J.H."/>
            <person name="Gu Z."/>
            <person name="Guan P."/>
            <person name="Harris M."/>
            <person name="Harris N.L."/>
            <person name="Harvey D.A."/>
            <person name="Heiman T.J."/>
            <person name="Hernandez J.R."/>
            <person name="Houck J."/>
            <person name="Hostin D."/>
            <person name="Houston K.A."/>
            <person name="Howland T.J."/>
            <person name="Wei M.-H."/>
            <person name="Ibegwam C."/>
            <person name="Jalali M."/>
            <person name="Kalush F."/>
            <person name="Karpen G.H."/>
            <person name="Ke Z."/>
            <person name="Kennison J.A."/>
            <person name="Ketchum K.A."/>
            <person name="Kimmel B.E."/>
            <person name="Kodira C.D."/>
            <person name="Kraft C.L."/>
            <person name="Kravitz S."/>
            <person name="Kulp D."/>
            <person name="Lai Z."/>
            <person name="Lasko P."/>
            <person name="Lei Y."/>
            <person name="Levitsky A.A."/>
            <person name="Li J.H."/>
            <person name="Li Z."/>
            <person name="Liang Y."/>
            <person name="Lin X."/>
            <person name="Liu X."/>
            <person name="Mattei B."/>
            <person name="McIntosh T.C."/>
            <person name="McLeod M.P."/>
            <person name="McPherson D."/>
            <person name="Merkulov G."/>
            <person name="Milshina N.V."/>
            <person name="Mobarry C."/>
            <person name="Morris J."/>
            <person name="Moshrefi A."/>
            <person name="Mount S.M."/>
            <person name="Moy M."/>
            <person name="Murphy B."/>
            <person name="Murphy L."/>
            <person name="Muzny D.M."/>
            <person name="Nelson D.L."/>
            <person name="Nelson D.R."/>
            <person name="Nelson K.A."/>
            <person name="Nixon K."/>
            <person name="Nusskern D.R."/>
            <person name="Pacleb J.M."/>
            <person name="Palazzolo M."/>
            <person name="Pittman G.S."/>
            <person name="Pan S."/>
            <person name="Pollard J."/>
            <person name="Puri V."/>
            <person name="Reese M.G."/>
            <person name="Reinert K."/>
            <person name="Remington K."/>
            <person name="Saunders R.D.C."/>
            <person name="Scheeler F."/>
            <person name="Shen H."/>
            <person name="Shue B.C."/>
            <person name="Siden-Kiamos I."/>
            <person name="Simpson M."/>
            <person name="Skupski M.P."/>
            <person name="Smith T.J."/>
            <person name="Spier E."/>
            <person name="Spradling A.C."/>
            <person name="Stapleton M."/>
            <person name="Strong R."/>
            <person name="Sun E."/>
            <person name="Svirskas R."/>
            <person name="Tector C."/>
            <person name="Turner R."/>
            <person name="Venter E."/>
            <person name="Wang A.H."/>
            <person name="Wang X."/>
            <person name="Wang Z.-Y."/>
            <person name="Wassarman D.A."/>
            <person name="Weinstock G.M."/>
            <person name="Weissenbach J."/>
            <person name="Williams S.M."/>
            <person name="Woodage T."/>
            <person name="Worley K.C."/>
            <person name="Wu D."/>
            <person name="Yang S."/>
            <person name="Yao Q.A."/>
            <person name="Ye J."/>
            <person name="Yeh R.-F."/>
            <person name="Zaveri J.S."/>
            <person name="Zhan M."/>
            <person name="Zhang G."/>
            <person name="Zhao Q."/>
            <person name="Zheng L."/>
            <person name="Zheng X.H."/>
            <person name="Zhong F.N."/>
            <person name="Zhong W."/>
            <person name="Zhou X."/>
            <person name="Zhu S.C."/>
            <person name="Zhu X."/>
            <person name="Smith H.O."/>
            <person name="Gibbs R.A."/>
            <person name="Myers E.W."/>
            <person name="Rubin G.M."/>
            <person name="Venter J.C."/>
        </authorList>
    </citation>
    <scope>NUCLEOTIDE SEQUENCE [LARGE SCALE GENOMIC DNA]</scope>
    <source>
        <strain evidence="8">Berkeley</strain>
    </source>
</reference>
<reference evidence="8" key="2">
    <citation type="journal article" date="2002" name="Genome Biol.">
        <title>Annotation of the Drosophila melanogaster euchromatic genome: a systematic review.</title>
        <authorList>
            <person name="Misra S."/>
            <person name="Crosby M.A."/>
            <person name="Mungall C.J."/>
            <person name="Matthews B.B."/>
            <person name="Campbell K.S."/>
            <person name="Hradecky P."/>
            <person name="Huang Y."/>
            <person name="Kaminker J.S."/>
            <person name="Millburn G.H."/>
            <person name="Prochnik S.E."/>
            <person name="Smith C.D."/>
            <person name="Tupy J.L."/>
            <person name="Whitfield E.J."/>
            <person name="Bayraktaroglu L."/>
            <person name="Berman B.P."/>
            <person name="Bettencourt B.R."/>
            <person name="Celniker S.E."/>
            <person name="de Grey A.D.N.J."/>
            <person name="Drysdale R.A."/>
            <person name="Harris N.L."/>
            <person name="Richter J."/>
            <person name="Russo S."/>
            <person name="Schroeder A.J."/>
            <person name="Shu S.Q."/>
            <person name="Stapleton M."/>
            <person name="Yamada C."/>
            <person name="Ashburner M."/>
            <person name="Gelbart W.M."/>
            <person name="Rubin G.M."/>
            <person name="Lewis S.E."/>
        </authorList>
    </citation>
    <scope>GENOME REANNOTATION</scope>
    <source>
        <strain evidence="8">Berkeley</strain>
    </source>
</reference>
<reference evidence="6" key="3">
    <citation type="journal article" date="2002" name="Genome Biol.">
        <title>A Drosophila full-length cDNA resource.</title>
        <authorList>
            <person name="Stapleton M."/>
            <person name="Carlson J.W."/>
            <person name="Brokstein P."/>
            <person name="Yu C."/>
            <person name="Champe M."/>
            <person name="George R.A."/>
            <person name="Guarin H."/>
            <person name="Kronmiller B."/>
            <person name="Pacleb J.M."/>
            <person name="Park S."/>
            <person name="Wan K.H."/>
            <person name="Rubin G.M."/>
            <person name="Celniker S.E."/>
        </authorList>
    </citation>
    <scope>NUCLEOTIDE SEQUENCE [LARGE SCALE MRNA]</scope>
    <source>
        <strain evidence="6">Berkeley</strain>
        <tissue evidence="6">Testis</tissue>
    </source>
</reference>
<reference evidence="5" key="4">
    <citation type="journal article" date="2014" name="EMBO Rep.">
        <title>UCP4C mediates uncoupled respiration in larvae of Drosophila melanogaster.</title>
        <authorList>
            <person name="Da-Re C."/>
            <person name="De Pitta C."/>
            <person name="Zordan M.A."/>
            <person name="Teza G."/>
            <person name="Nestola F."/>
            <person name="Zeviani M."/>
            <person name="Costa R."/>
            <person name="Bernardi P."/>
        </authorList>
    </citation>
    <scope>FUNCTION</scope>
    <scope>DISRUPTION PHENOTYPE</scope>
</reference>
<name>UCP4C_DROME</name>
<keyword id="KW-0472">Membrane</keyword>
<keyword id="KW-0496">Mitochondrion</keyword>
<keyword id="KW-0999">Mitochondrion inner membrane</keyword>
<keyword id="KW-1185">Reference proteome</keyword>
<keyword id="KW-0677">Repeat</keyword>
<keyword id="KW-0812">Transmembrane</keyword>
<keyword id="KW-1133">Transmembrane helix</keyword>
<keyword id="KW-0813">Transport</keyword>
<gene>
    <name evidence="4 7" type="primary">Ucp4C</name>
    <name evidence="7" type="ORF">CG9064</name>
</gene>
<accession>Q9VMK1</accession>
<sequence length="335" mass="38194">MDKAERDYWHLRSLEIEEEPRFPPTNVADPLTARNLFQLYVNTFIGANLAESCVFPLDVAKTRMQVDGEQAKKTGKAMPTFRATLTNMIRVEGFKSLYAGFSAMVTRNFIFNSLRVVLYDVFRRPFLYQNERNEEVLKIYMALGCSFTAGCIAQALANPFDIVKVRMQTEGRRRQLGYDVRVNSMVQAFVDIYRRGGLPSMWKGVGPSCMRACLMTTGDVGSYDISKRTFKRLLDLEEGLPLRFVSSMCAGLTASVLSTPADVIKSRMMNQPVDESGKNLYYKNSLDCVRKLVREEGVLTLYKGLMPTWFRLGPFSVLFWLSVEQLRQWEGQSGF</sequence>
<protein>
    <recommendedName>
        <fullName evidence="4">Mitochondrial uncoupling protein 4C</fullName>
    </recommendedName>
</protein>
<organism evidence="8">
    <name type="scientific">Drosophila melanogaster</name>
    <name type="common">Fruit fly</name>
    <dbReference type="NCBI Taxonomy" id="7227"/>
    <lineage>
        <taxon>Eukaryota</taxon>
        <taxon>Metazoa</taxon>
        <taxon>Ecdysozoa</taxon>
        <taxon>Arthropoda</taxon>
        <taxon>Hexapoda</taxon>
        <taxon>Insecta</taxon>
        <taxon>Pterygota</taxon>
        <taxon>Neoptera</taxon>
        <taxon>Endopterygota</taxon>
        <taxon>Diptera</taxon>
        <taxon>Brachycera</taxon>
        <taxon>Muscomorpha</taxon>
        <taxon>Ephydroidea</taxon>
        <taxon>Drosophilidae</taxon>
        <taxon>Drosophila</taxon>
        <taxon>Sophophora</taxon>
    </lineage>
</organism>
<evidence type="ECO:0000255" key="1"/>
<evidence type="ECO:0000255" key="2">
    <source>
        <dbReference type="PROSITE-ProRule" id="PRU00282"/>
    </source>
</evidence>
<evidence type="ECO:0000269" key="3">
    <source>
    </source>
</evidence>
<evidence type="ECO:0000303" key="4">
    <source>
    </source>
</evidence>
<evidence type="ECO:0000305" key="5"/>
<evidence type="ECO:0000312" key="6">
    <source>
        <dbReference type="EMBL" id="AAL90083.1"/>
    </source>
</evidence>
<evidence type="ECO:0000312" key="7">
    <source>
        <dbReference type="FlyBase" id="FBgn0031757"/>
    </source>
</evidence>
<evidence type="ECO:0000312" key="8">
    <source>
        <dbReference type="Proteomes" id="UP000000803"/>
    </source>
</evidence>
<comment type="function">
    <text evidence="3">Mitochondrial protein that is likely to be responsible for thermogenic respiration. Likely to function in mitochondrial uncoupling i.e. creating mitochondrial proton leaks across the inner mitochondrial membrane and can therefore dissipate the mitochondrial proton gradient and convert the energy of substrate oxidation into heat instead of ATP. Involved in cold tolerance, it is required for development to the adult stage at low temperatures.</text>
</comment>
<comment type="subcellular location">
    <subcellularLocation>
        <location evidence="5">Mitochondrion inner membrane</location>
        <topology evidence="1">Multi-pass membrane protein</topology>
    </subcellularLocation>
</comment>
<comment type="disruption phenotype">
    <text evidence="3">RNAi-mediated knockdown is adult lethal at low temperatures. At 15 degrees Celsius there is a severe reduction in the number of larvae and flies do not survive to the adult stage. Second instar larvae moved from 23 to 14 degrees Celsius show no heat production in response to the decrease in temperature. In second instar larvae body wall preparations, maximal oxygen consumption rate (i.e. mitochondrial respiration) is significantly higher than the controls, and the addition of the uncoupler carbonyl cyanide p-[trifluoromethoxy]-phenyl-hydrazone followed by the ATP inhibitor oligomycin results in a threefold increase in the oxygen consumption rate. Uncoupling in larval mitochondria in response to the addition of palmitate is also suppressed.</text>
</comment>
<comment type="similarity">
    <text evidence="5">Belongs to the mitochondrial carrier (TC 2.A.29) family.</text>
</comment>
<proteinExistence type="evidence at transcript level"/>
<dbReference type="EMBL" id="AE014134">
    <property type="protein sequence ID" value="AAF52313.1"/>
    <property type="molecule type" value="Genomic_DNA"/>
</dbReference>
<dbReference type="EMBL" id="AY089345">
    <property type="protein sequence ID" value="AAL90083.1"/>
    <property type="molecule type" value="mRNA"/>
</dbReference>
<dbReference type="RefSeq" id="NP_608976.1">
    <property type="nucleotide sequence ID" value="NM_135132.3"/>
</dbReference>
<dbReference type="SMR" id="Q9VMK1"/>
<dbReference type="STRING" id="7227.FBpp0078803"/>
<dbReference type="PaxDb" id="7227-FBpp0078803"/>
<dbReference type="DNASU" id="33832"/>
<dbReference type="EnsemblMetazoa" id="FBtr0079172">
    <property type="protein sequence ID" value="FBpp0078803"/>
    <property type="gene ID" value="FBgn0031757"/>
</dbReference>
<dbReference type="GeneID" id="33832"/>
<dbReference type="KEGG" id="dme:Dmel_CG9064"/>
<dbReference type="UCSC" id="CG9064-RA">
    <property type="organism name" value="d. melanogaster"/>
</dbReference>
<dbReference type="AGR" id="FB:FBgn0031757"/>
<dbReference type="CTD" id="33832"/>
<dbReference type="FlyBase" id="FBgn0031757">
    <property type="gene designation" value="Ucp4C"/>
</dbReference>
<dbReference type="VEuPathDB" id="VectorBase:FBgn0031757"/>
<dbReference type="eggNOG" id="KOG0753">
    <property type="taxonomic scope" value="Eukaryota"/>
</dbReference>
<dbReference type="GeneTree" id="ENSGT00940000160098"/>
<dbReference type="HOGENOM" id="CLU_015166_14_2_1"/>
<dbReference type="InParanoid" id="Q9VMK1"/>
<dbReference type="OMA" id="LIPCWLR"/>
<dbReference type="OrthoDB" id="756301at2759"/>
<dbReference type="PhylomeDB" id="Q9VMK1"/>
<dbReference type="BioGRID-ORCS" id="33832">
    <property type="hits" value="0 hits in 1 CRISPR screen"/>
</dbReference>
<dbReference type="GenomeRNAi" id="33832"/>
<dbReference type="PRO" id="PR:Q9VMK1"/>
<dbReference type="Proteomes" id="UP000000803">
    <property type="component" value="Chromosome 2L"/>
</dbReference>
<dbReference type="Bgee" id="FBgn0031757">
    <property type="expression patterns" value="Expressed in mid-late elongation-stage spermatid (Drosophila) in testis and 21 other cell types or tissues"/>
</dbReference>
<dbReference type="GO" id="GO:0005743">
    <property type="term" value="C:mitochondrial inner membrane"/>
    <property type="evidence" value="ECO:0007669"/>
    <property type="project" value="UniProtKB-SubCell"/>
</dbReference>
<dbReference type="GO" id="GO:0022857">
    <property type="term" value="F:transmembrane transporter activity"/>
    <property type="evidence" value="ECO:0000318"/>
    <property type="project" value="GO_Central"/>
</dbReference>
<dbReference type="GO" id="GO:0009409">
    <property type="term" value="P:response to cold"/>
    <property type="evidence" value="ECO:0000318"/>
    <property type="project" value="GO_Central"/>
</dbReference>
<dbReference type="FunFam" id="1.50.40.10:FF:000230">
    <property type="entry name" value="GM18585"/>
    <property type="match status" value="1"/>
</dbReference>
<dbReference type="Gene3D" id="1.50.40.10">
    <property type="entry name" value="Mitochondrial carrier domain"/>
    <property type="match status" value="1"/>
</dbReference>
<dbReference type="InterPro" id="IPR002067">
    <property type="entry name" value="Mit_carrier"/>
</dbReference>
<dbReference type="InterPro" id="IPR050391">
    <property type="entry name" value="Mito_Metabolite_Transporter"/>
</dbReference>
<dbReference type="InterPro" id="IPR018108">
    <property type="entry name" value="Mitochondrial_sb/sol_carrier"/>
</dbReference>
<dbReference type="InterPro" id="IPR023395">
    <property type="entry name" value="Mt_carrier_dom_sf"/>
</dbReference>
<dbReference type="PANTHER" id="PTHR45618">
    <property type="entry name" value="MITOCHONDRIAL DICARBOXYLATE CARRIER-RELATED"/>
    <property type="match status" value="1"/>
</dbReference>
<dbReference type="Pfam" id="PF00153">
    <property type="entry name" value="Mito_carr"/>
    <property type="match status" value="3"/>
</dbReference>
<dbReference type="PRINTS" id="PR00926">
    <property type="entry name" value="MITOCARRIER"/>
</dbReference>
<dbReference type="SUPFAM" id="SSF103506">
    <property type="entry name" value="Mitochondrial carrier"/>
    <property type="match status" value="1"/>
</dbReference>
<dbReference type="PROSITE" id="PS50920">
    <property type="entry name" value="SOLCAR"/>
    <property type="match status" value="3"/>
</dbReference>
<feature type="chain" id="PRO_0000438777" description="Mitochondrial uncoupling protein 4C">
    <location>
        <begin position="1"/>
        <end position="335"/>
    </location>
</feature>
<feature type="transmembrane region" description="Helical; Name=1" evidence="1">
    <location>
        <begin position="40"/>
        <end position="57"/>
    </location>
</feature>
<feature type="transmembrane region" description="Helical; Name=2" evidence="1">
    <location>
        <begin position="100"/>
        <end position="118"/>
    </location>
</feature>
<feature type="transmembrane region" description="Helical; Name=3" evidence="1">
    <location>
        <begin position="138"/>
        <end position="157"/>
    </location>
</feature>
<feature type="transmembrane region" description="Helical; Name=4" evidence="1">
    <location>
        <begin position="204"/>
        <end position="223"/>
    </location>
</feature>
<feature type="transmembrane region" description="Helical; Name=5" evidence="1">
    <location>
        <begin position="244"/>
        <end position="264"/>
    </location>
</feature>
<feature type="transmembrane region" description="Helical; Name=6" evidence="1">
    <location>
        <begin position="304"/>
        <end position="323"/>
    </location>
</feature>
<feature type="repeat" description="Solcar 1" evidence="2">
    <location>
        <begin position="34"/>
        <end position="125"/>
    </location>
</feature>
<feature type="repeat" description="Solcar 2" evidence="2">
    <location>
        <begin position="137"/>
        <end position="229"/>
    </location>
</feature>
<feature type="repeat" description="Solcar 3" evidence="2">
    <location>
        <begin position="238"/>
        <end position="329"/>
    </location>
</feature>